<proteinExistence type="inferred from homology"/>
<name>XERD_MYCTO</name>
<feature type="chain" id="PRO_0000428609" description="Tyrosine recombinase XerD">
    <location>
        <begin position="1"/>
        <end position="311"/>
    </location>
</feature>
<feature type="domain" description="Core-binding (CB)" evidence="3">
    <location>
        <begin position="2"/>
        <end position="95"/>
    </location>
</feature>
<feature type="domain" description="Tyr recombinase" evidence="2">
    <location>
        <begin position="116"/>
        <end position="304"/>
    </location>
</feature>
<feature type="active site" evidence="1">
    <location>
        <position position="160"/>
    </location>
</feature>
<feature type="active site" evidence="1">
    <location>
        <position position="184"/>
    </location>
</feature>
<feature type="active site" evidence="1">
    <location>
        <position position="256"/>
    </location>
</feature>
<feature type="active site" evidence="1">
    <location>
        <position position="259"/>
    </location>
</feature>
<feature type="active site" evidence="1">
    <location>
        <position position="282"/>
    </location>
</feature>
<feature type="active site" description="O-(3'-phospho-DNA)-tyrosine intermediate" evidence="1">
    <location>
        <position position="291"/>
    </location>
</feature>
<comment type="function">
    <text evidence="1">Site-specific tyrosine recombinase, which acts by catalyzing the cutting and rejoining of the recombining DNA molecules. The XerC-XerD complex is essential to convert dimers of the bacterial chromosome into monomers to permit their segregation at cell division. It also contributes to the segregational stability of plasmids.</text>
</comment>
<comment type="subunit">
    <text evidence="1">Forms a cyclic heterotetrameric complex composed of two molecules of XerC and two molecules of XerD.</text>
</comment>
<comment type="subcellular location">
    <subcellularLocation>
        <location evidence="1">Cytoplasm</location>
    </subcellularLocation>
</comment>
<comment type="similarity">
    <text evidence="1">Belongs to the 'phage' integrase family. XerD subfamily.</text>
</comment>
<keyword id="KW-0131">Cell cycle</keyword>
<keyword id="KW-0132">Cell division</keyword>
<keyword id="KW-0159">Chromosome partition</keyword>
<keyword id="KW-0963">Cytoplasm</keyword>
<keyword id="KW-0229">DNA integration</keyword>
<keyword id="KW-0233">DNA recombination</keyword>
<keyword id="KW-0238">DNA-binding</keyword>
<keyword id="KW-1185">Reference proteome</keyword>
<organism>
    <name type="scientific">Mycobacterium tuberculosis (strain CDC 1551 / Oshkosh)</name>
    <dbReference type="NCBI Taxonomy" id="83331"/>
    <lineage>
        <taxon>Bacteria</taxon>
        <taxon>Bacillati</taxon>
        <taxon>Actinomycetota</taxon>
        <taxon>Actinomycetes</taxon>
        <taxon>Mycobacteriales</taxon>
        <taxon>Mycobacteriaceae</taxon>
        <taxon>Mycobacterium</taxon>
        <taxon>Mycobacterium tuberculosis complex</taxon>
    </lineage>
</organism>
<evidence type="ECO:0000255" key="1">
    <source>
        <dbReference type="HAMAP-Rule" id="MF_01807"/>
    </source>
</evidence>
<evidence type="ECO:0000255" key="2">
    <source>
        <dbReference type="PROSITE-ProRule" id="PRU01246"/>
    </source>
</evidence>
<evidence type="ECO:0000255" key="3">
    <source>
        <dbReference type="PROSITE-ProRule" id="PRU01248"/>
    </source>
</evidence>
<dbReference type="EMBL" id="AE000516">
    <property type="protein sequence ID" value="AAK46009.1"/>
    <property type="molecule type" value="Genomic_DNA"/>
</dbReference>
<dbReference type="PIR" id="D70503">
    <property type="entry name" value="D70503"/>
</dbReference>
<dbReference type="RefSeq" id="WP_003408401.1">
    <property type="nucleotide sequence ID" value="NZ_KK341227.1"/>
</dbReference>
<dbReference type="SMR" id="P9WF32"/>
<dbReference type="GeneID" id="45425670"/>
<dbReference type="KEGG" id="mtc:MT1740"/>
<dbReference type="PATRIC" id="fig|83331.31.peg.1868"/>
<dbReference type="HOGENOM" id="CLU_027562_9_0_11"/>
<dbReference type="Proteomes" id="UP000001020">
    <property type="component" value="Chromosome"/>
</dbReference>
<dbReference type="GO" id="GO:0005737">
    <property type="term" value="C:cytoplasm"/>
    <property type="evidence" value="ECO:0007669"/>
    <property type="project" value="UniProtKB-SubCell"/>
</dbReference>
<dbReference type="GO" id="GO:0003677">
    <property type="term" value="F:DNA binding"/>
    <property type="evidence" value="ECO:0007669"/>
    <property type="project" value="UniProtKB-KW"/>
</dbReference>
<dbReference type="GO" id="GO:0009037">
    <property type="term" value="F:tyrosine-based site-specific recombinase activity"/>
    <property type="evidence" value="ECO:0007669"/>
    <property type="project" value="UniProtKB-UniRule"/>
</dbReference>
<dbReference type="GO" id="GO:0051301">
    <property type="term" value="P:cell division"/>
    <property type="evidence" value="ECO:0007669"/>
    <property type="project" value="UniProtKB-KW"/>
</dbReference>
<dbReference type="GO" id="GO:0007059">
    <property type="term" value="P:chromosome segregation"/>
    <property type="evidence" value="ECO:0007669"/>
    <property type="project" value="UniProtKB-UniRule"/>
</dbReference>
<dbReference type="GO" id="GO:0006313">
    <property type="term" value="P:DNA transposition"/>
    <property type="evidence" value="ECO:0007669"/>
    <property type="project" value="UniProtKB-UniRule"/>
</dbReference>
<dbReference type="CDD" id="cd00798">
    <property type="entry name" value="INT_XerDC_C"/>
    <property type="match status" value="1"/>
</dbReference>
<dbReference type="Gene3D" id="1.10.150.130">
    <property type="match status" value="1"/>
</dbReference>
<dbReference type="Gene3D" id="1.10.443.10">
    <property type="entry name" value="Intergrase catalytic core"/>
    <property type="match status" value="1"/>
</dbReference>
<dbReference type="HAMAP" id="MF_01808">
    <property type="entry name" value="Recomb_XerC_XerD"/>
    <property type="match status" value="1"/>
</dbReference>
<dbReference type="HAMAP" id="MF_01807">
    <property type="entry name" value="Recomb_XerD"/>
    <property type="match status" value="1"/>
</dbReference>
<dbReference type="InterPro" id="IPR044068">
    <property type="entry name" value="CB"/>
</dbReference>
<dbReference type="InterPro" id="IPR011010">
    <property type="entry name" value="DNA_brk_join_enz"/>
</dbReference>
<dbReference type="InterPro" id="IPR013762">
    <property type="entry name" value="Integrase-like_cat_sf"/>
</dbReference>
<dbReference type="InterPro" id="IPR002104">
    <property type="entry name" value="Integrase_catalytic"/>
</dbReference>
<dbReference type="InterPro" id="IPR010998">
    <property type="entry name" value="Integrase_recombinase_N"/>
</dbReference>
<dbReference type="InterPro" id="IPR004107">
    <property type="entry name" value="Integrase_SAM-like_N"/>
</dbReference>
<dbReference type="InterPro" id="IPR011932">
    <property type="entry name" value="Recomb_XerD"/>
</dbReference>
<dbReference type="InterPro" id="IPR023009">
    <property type="entry name" value="Tyrosine_recombinase_XerC/XerD"/>
</dbReference>
<dbReference type="InterPro" id="IPR050090">
    <property type="entry name" value="Tyrosine_recombinase_XerCD"/>
</dbReference>
<dbReference type="NCBIfam" id="NF001399">
    <property type="entry name" value="PRK00283.1"/>
    <property type="match status" value="1"/>
</dbReference>
<dbReference type="NCBIfam" id="TIGR02225">
    <property type="entry name" value="recomb_XerD"/>
    <property type="match status" value="1"/>
</dbReference>
<dbReference type="PANTHER" id="PTHR30349">
    <property type="entry name" value="PHAGE INTEGRASE-RELATED"/>
    <property type="match status" value="1"/>
</dbReference>
<dbReference type="PANTHER" id="PTHR30349:SF81">
    <property type="entry name" value="TYROSINE RECOMBINASE XERC"/>
    <property type="match status" value="1"/>
</dbReference>
<dbReference type="Pfam" id="PF02899">
    <property type="entry name" value="Phage_int_SAM_1"/>
    <property type="match status" value="1"/>
</dbReference>
<dbReference type="Pfam" id="PF00589">
    <property type="entry name" value="Phage_integrase"/>
    <property type="match status" value="1"/>
</dbReference>
<dbReference type="SUPFAM" id="SSF56349">
    <property type="entry name" value="DNA breaking-rejoining enzymes"/>
    <property type="match status" value="1"/>
</dbReference>
<dbReference type="PROSITE" id="PS51900">
    <property type="entry name" value="CB"/>
    <property type="match status" value="1"/>
</dbReference>
<dbReference type="PROSITE" id="PS51898">
    <property type="entry name" value="TYR_RECOMBINASE"/>
    <property type="match status" value="1"/>
</dbReference>
<protein>
    <recommendedName>
        <fullName evidence="1">Tyrosine recombinase XerD</fullName>
    </recommendedName>
</protein>
<sequence>MKTLALQLQGYLDHLTIERGVAANTLSSYRRDLRRYSKHLEERGITDLAKVGEHDVSEFLVALRRGDPDSGTAALSAVSAARALIAVRGLHRFAAAEGLAELDVARAVRPPTPSRRLPKSLTIDEVLSLLEGAGGDKPSDGPLTLRNRAVLELLYSTGARISEAVGLDLDDIDTHARSVLLRGKGGKQRLVPVGRPAVHALDAYLVRGRPDLARRGRGTAAIFLNARGGRLSRQSAWQVLQDAAERAGITAGVSPHMLRHSFATHLLEGGADVRVVQELLGHASVTTTQIYTLVTVHALREVWAGAHPRAR</sequence>
<gene>
    <name evidence="1" type="primary">xerD</name>
    <name type="ordered locus">MT1740</name>
</gene>
<accession>P9WF32</accession>
<accession>L0T7F4</accession>
<accession>O33200</accession>
<accession>P67636</accession>
<reference key="1">
    <citation type="journal article" date="2002" name="J. Bacteriol.">
        <title>Whole-genome comparison of Mycobacterium tuberculosis clinical and laboratory strains.</title>
        <authorList>
            <person name="Fleischmann R.D."/>
            <person name="Alland D."/>
            <person name="Eisen J.A."/>
            <person name="Carpenter L."/>
            <person name="White O."/>
            <person name="Peterson J.D."/>
            <person name="DeBoy R.T."/>
            <person name="Dodson R.J."/>
            <person name="Gwinn M.L."/>
            <person name="Haft D.H."/>
            <person name="Hickey E.K."/>
            <person name="Kolonay J.F."/>
            <person name="Nelson W.C."/>
            <person name="Umayam L.A."/>
            <person name="Ermolaeva M.D."/>
            <person name="Salzberg S.L."/>
            <person name="Delcher A."/>
            <person name="Utterback T.R."/>
            <person name="Weidman J.F."/>
            <person name="Khouri H.M."/>
            <person name="Gill J."/>
            <person name="Mikula A."/>
            <person name="Bishai W."/>
            <person name="Jacobs W.R. Jr."/>
            <person name="Venter J.C."/>
            <person name="Fraser C.M."/>
        </authorList>
    </citation>
    <scope>NUCLEOTIDE SEQUENCE [LARGE SCALE GENOMIC DNA]</scope>
    <source>
        <strain>CDC 1551 / Oshkosh</strain>
    </source>
</reference>